<gene>
    <name type="primary">Nr4a3</name>
    <name type="synonym">Tec</name>
</gene>
<feature type="chain" id="PRO_0000053723" description="Nuclear receptor subfamily 4 group A member 3">
    <location>
        <begin position="1"/>
        <end position="627"/>
    </location>
</feature>
<feature type="domain" description="NR LBD" evidence="4">
    <location>
        <begin position="395"/>
        <end position="624"/>
    </location>
</feature>
<feature type="DNA-binding region" description="Nuclear receptor" evidence="3">
    <location>
        <begin position="290"/>
        <end position="365"/>
    </location>
</feature>
<feature type="zinc finger region" description="NR C4-type" evidence="3">
    <location>
        <begin position="293"/>
        <end position="313"/>
    </location>
</feature>
<feature type="zinc finger region" description="NR C4-type" evidence="3">
    <location>
        <begin position="329"/>
        <end position="353"/>
    </location>
</feature>
<feature type="region of interest" description="Interaction with NCOA1, NCOA2, NCOA3 and KAT2B" evidence="7">
    <location>
        <begin position="1"/>
        <end position="292"/>
    </location>
</feature>
<feature type="region of interest" description="Required for DNA-PK heterotrimer" evidence="2">
    <location>
        <begin position="1"/>
        <end position="139"/>
    </location>
</feature>
<feature type="region of interest" description="Activation function (AF)-1 domain" evidence="7">
    <location>
        <begin position="1"/>
        <end position="112"/>
    </location>
</feature>
<feature type="region of interest" description="Disordered" evidence="5">
    <location>
        <begin position="96"/>
        <end position="162"/>
    </location>
</feature>
<feature type="region of interest" description="Disordered" evidence="5">
    <location>
        <begin position="268"/>
        <end position="289"/>
    </location>
</feature>
<feature type="region of interest" description="Disordered" evidence="5">
    <location>
        <begin position="365"/>
        <end position="395"/>
    </location>
</feature>
<feature type="region of interest" description="Interaction with KAT2B" evidence="7">
    <location>
        <begin position="380"/>
        <end position="627"/>
    </location>
</feature>
<feature type="compositionally biased region" description="Basic residues" evidence="5">
    <location>
        <begin position="97"/>
        <end position="112"/>
    </location>
</feature>
<feature type="compositionally biased region" description="Pro residues" evidence="5">
    <location>
        <begin position="141"/>
        <end position="150"/>
    </location>
</feature>
<feature type="compositionally biased region" description="Low complexity" evidence="5">
    <location>
        <begin position="269"/>
        <end position="288"/>
    </location>
</feature>
<feature type="compositionally biased region" description="Low complexity" evidence="5">
    <location>
        <begin position="378"/>
        <end position="388"/>
    </location>
</feature>
<feature type="splice variant" id="VSP_010083" description="In isoform 2." evidence="20">
    <original>YCPTDQATAG</original>
    <variation>VSSMNAFEPL</variation>
    <location>
        <begin position="420"/>
        <end position="429"/>
    </location>
</feature>
<feature type="splice variant" id="VSP_010084" description="In isoform 2." evidence="20">
    <location>
        <begin position="430"/>
        <end position="627"/>
    </location>
</feature>
<comment type="function">
    <text evidence="1 2 6 7 8 9 10 11 12 13 14 15 16 17 18 19">Transcriptional activator that binds to regulatory elements in promoter regions in a cell- and response element (target)-specific manner (PubMed:12709428). Induces gene expression by binding as monomers to the NR4A1 response element (NBRE) 5'-AAAAGGTCA-3' site and as homodimers to the Nur response element (NurRE) site in the promoter of their regulated target genes (By similarity). Plays a role in the regulation of proliferation, survival and differentiation of many different cell types and also in metabolism and inflammation. Mediates proliferation of vascular smooth muscle, myeloid progenitor cell and type B pancreatic cells; promotes mitogen-induced vascular smooth muscle cell proliferation through transactivation of SKP2 promoter by binding a NBRE site (PubMed:21868379). Upon PDGF stimulation, stimulates vascular smooth muscle cell proliferation by regulating CCND1 and CCND2 expression. In islets, induces type B pancreatic cell proliferation through up-regulation of genes that activate cell cycle, as well as genes that cause degradation of the CDKN1A (By similarity). Negatively regulates myeloid progenitor cell proliferation by repressing RUNX1 in a NBRE site-independent manner (PubMed:24806827). During inner ear, plays a role as a key mediator of the proliferative growth phase of semicircular canal development (PubMed:11784868). Also mediates survival of neuron and smooth muscle cells; mediates CREB-induced neuronal survival, and during hippocampus development, plays a critical role in pyramidal cell survival and axonal guidance (PubMed:15456880, PubMed:20566846). Is required for S phase entry of the cell cycle and survival of smooth muscle cells by inducing CCND1, resulting in RB1 phosphorylation. Binds to NBRE motif in CCND1 promoter, resulting in the activation of the promoter and CCND1 transcription (PubMed:19153266). Also plays a role in inflammation; upon TNF stimulation, mediates monocyte adhesion by inducing the expression of VCAM1 and ICAM1 by binding to the NBRE consensus site (PubMed:20558821). In mast cells activated by Fc-epsilon receptor cross-linking, promotes the synthesis and release of cytokines but impairs events leading to degranulation (PubMed:24586680). Also plays a role in metabolism; by modulating feeding behavior; and by playing a role in energy balance by inhibiting the glucocorticoid-induced orexigenic neuropeptides AGRP expression, at least in part by forming a complex with activated NR3C1 on the AGRP- glucocorticoid response element (GRE), and thus weakening the DNA binding activity of NR3C1 (PubMed:19523439, PubMed:23897430). Upon catecholamines stimulation, regulates gene expression that controls oxidative metabolism in skeletal muscle (PubMed:18325999). Plays a role in glucose transport by regulating translocation of the SLC2A4 glucose transporter to the cell surface (By similarity). Finally, during gastrulation plays a crucial role in the formation of anterior mesoderm by controlling cell migration (PubMed:13129926). Inhibits adipogenesis (PubMed:18945812). Also participates in cardiac hypertrophy by activating PARP1 (By similarity).</text>
</comment>
<comment type="subunit">
    <text evidence="1 2 7">Interacts with SIX3 (via homeobox); differentially regulates the transcriptional activities of NR4A3. Interacts with NCOA2; potentiates the activity of the NR4A3 (PubMed:12709428). Interacts with NCOA1, NCOA3, MED1 and KAT2B. Interacts with EP300 and NCOA2; mediates the recruitment of MED1 in the coactivator complex (PubMed:12709428). Interacts with the constituents of DNA-PK heterotrimer PRKDC, XRCC6 and XRCC5; phosphorylates and prevents NR4A3 ubiquitinylation and degradation (By similarity). Interacts with NR3C1 (via nuclear receptor DNA-binding domain); the interactions represses transcription activity of NR4A3 on the POMC promoter Nur response element (NurRE). Interacts with TRIM28; the interactions potentiates NR4A3 activity on NurRE promoter. Binds DNA as a monomer and homodimer. Interacts with PARP1; activates PARP1 by improving acetylation of PARP1 and suppressing the interaction between PARP1 and SIRT1 (By similarity).</text>
</comment>
<comment type="subcellular location">
    <subcellularLocation>
        <location evidence="3">Nucleus</location>
    </subcellularLocation>
</comment>
<comment type="alternative products">
    <event type="alternative splicing"/>
    <isoform>
        <id>Q9QZB6-1</id>
        <name>1</name>
        <name>Long</name>
        <sequence type="displayed"/>
    </isoform>
    <isoform>
        <id>Q9QZB6-2</id>
        <name>2</name>
        <name>Short</name>
        <name>TECdeltaC</name>
        <sequence type="described" ref="VSP_010083 VSP_010084"/>
    </isoform>
</comment>
<comment type="tissue specificity">
    <text>Ubiquitous. Highest levels of expression in brain. Widely expressed throughout the arcuate nucleus region of the hypothalamus, namely in AgRP neurons.</text>
</comment>
<comment type="developmental stage">
    <text evidence="6 8 9">Not expressed during the earliest stages of vesicle formation (10.5 dpc). Expression begins coincidentally with the initiation of regional shape changes in the otic vesicle at 11.5 dpc and is restricted to the dorsolateral region. At 13.5 dpc, expression is limited to the inner edge of the semicircular canal epithelium, flanking the site of fusion, and this restricted expression continues at P1 (PubMed:11784868). At 14.5 dpc expression is observed in the primitive plexiform layer of the hippocampus. At P0, expression is observed in both the pyramidal and granule cell layers. Expression persistes in these cells in the adult hippocampus after their postnatal maturation. In addition, expression is also observed in the hilar mossy cells of the dentate gyrus (PubMed:15456880). At 7.5 dpc expression is ubiquitous, whereas at 9 dpc and 9.5 dpc, expression is restricted to the brain (PubMed:13129926).</text>
</comment>
<comment type="induction">
    <text evidence="14 17">Induced by inflammatory stimuli (PubMed:20558821). Up-regulated by the anorexigenic signal leptin via the transcription factor cyclic AMP response element-binding protein (CREB). Suppressed by orexigenic signal glucocorticoid that mobilizes NR3C1 to inhibit NR4A3 expression by antagonizing the action of CREB (PubMed:23897430).</text>
</comment>
<comment type="domain">
    <text evidence="7">The AF-1 domain mediates transcription activation. The N-terminal region (1-292) directly interacts with the C-terminal LBD (380-627): the interaction is potentiated by AF-1-mediated recruitment of NCOA2.</text>
</comment>
<comment type="PTM">
    <text evidence="2">Phosphorylated by PRKDC.</text>
</comment>
<comment type="disruption phenotype">
    <text evidence="6 8 9 17">Nr4a3 homozygous knockout mice are viable and normal in appearance; however, abnormal hyperactive and partial bidirectional circling behavior is observed by 3 weeks of age in 15% of these mice. The circling behavior is interspersed with noncircling periods of feeding, grooming, and sleep (PubMed:11784868). A small percentage of adult Nr4a3 homozygotes displayes brief freezing spells with tonic posturing that are exacerbated with handling (PubMed:15456880). The overall food consumption of Nr4a3 homozygous knockout mice is higher. Moreover, Nr4a3 homozygous mice lose more body weight upon fasting but clearly consumed more food during refeeding. By the end of the fasting period, Nr4a3 homozygous mice display signs of exhaustion (PubMed:23897430). Nr4a3 homozygous leads to embryonic lethality around 8.5 dpc (PubMed:13129926).</text>
</comment>
<comment type="similarity">
    <text evidence="21">Belongs to the nuclear hormone receptor family. NR4 subfamily.</text>
</comment>
<reference key="1">
    <citation type="journal article" date="2000" name="DNA Cell Biol.">
        <title>Structure and expression of the mouse gene encoding the orphan nuclear receptor TEC.</title>
        <authorList>
            <person name="Maltais A."/>
            <person name="Labelle Y."/>
        </authorList>
    </citation>
    <scope>NUCLEOTIDE SEQUENCE [MRNA] (ISOFORMS 1 AND 2)</scope>
</reference>
<reference key="2">
    <citation type="journal article" date="2002" name="Mol. Cell. Biol.">
        <title>The nuclear receptor Nor-1 is essential for proliferation of the semicircular canals of the mouse inner ear.</title>
        <authorList>
            <person name="Ponnio T."/>
            <person name="Burton Q."/>
            <person name="Pereira F.A."/>
            <person name="Wu D.K."/>
            <person name="Conneely O.M."/>
        </authorList>
    </citation>
    <scope>FUNCTION</scope>
    <scope>DISRUPTION PHENOTYPE</scope>
    <scope>DEVELOPMENTAL STAGE</scope>
</reference>
<reference key="3">
    <citation type="journal article" date="2003" name="J. Biol. Chem.">
        <title>The AF-1 domain of the orphan nuclear receptor NOR-1 mediates trans-activation, coactivator recruitment, and activation by the purine anti-metabolite 6-mercaptopurine.</title>
        <authorList>
            <person name="Wansa K.D."/>
            <person name="Harris J.M."/>
            <person name="Yan G."/>
            <person name="Ordentlich P."/>
            <person name="Muscat G.E."/>
        </authorList>
    </citation>
    <scope>FUNCTION</scope>
    <scope>REGION</scope>
    <scope>DOMAIN</scope>
    <scope>INTERACTION WITH NCOA1; NCOA2; NCOA3; KAT2B; MED1 AND EP300</scope>
</reference>
<reference key="4">
    <citation type="journal article" date="2003" name="J. Biol. Chem.">
        <title>The orphan steroid receptor Nur77 family member Nor-1 is essential for early mouse embryogenesis.</title>
        <authorList>
            <person name="DeYoung R.A."/>
            <person name="Baker J.C."/>
            <person name="Cado D."/>
            <person name="Winoto A."/>
        </authorList>
    </citation>
    <scope>FUNCTION</scope>
    <scope>DEVELOPMENTAL STAGE</scope>
    <scope>DISRUPTION PHENOTYPE</scope>
</reference>
<reference key="5">
    <citation type="journal article" date="2004" name="Mol. Cell. Biol.">
        <title>nor-1 regulates hippocampal axon guidance, pyramidal cell survival, and seizure susceptibility.</title>
        <authorList>
            <person name="Ponnio T."/>
            <person name="Conneely O.M."/>
        </authorList>
    </citation>
    <scope>FUNCTION</scope>
    <scope>DISRUPTION PHENOTYPE</scope>
    <scope>DEVELOPMENTAL STAGE</scope>
</reference>
<reference key="6">
    <citation type="journal article" date="2008" name="Endocrinology">
        <title>The orphan nuclear receptor, NOR-1, a target of beta-adrenergic signaling, regulates gene expression that controls oxidative metabolism in skeletal muscle.</title>
        <authorList>
            <person name="Pearen M.A."/>
            <person name="Myers S.A."/>
            <person name="Raichur S."/>
            <person name="Ryall J.G."/>
            <person name="Lynch G.S."/>
            <person name="Muscat G.E."/>
        </authorList>
    </citation>
    <scope>FUNCTION</scope>
</reference>
<reference key="7">
    <citation type="journal article" date="2008" name="Mol. Endocrinol.">
        <title>Inhibition of adipocyte differentiation by Nur77, Nurr1, and Nor1.</title>
        <authorList>
            <person name="Chao L.C."/>
            <person name="Bensinger S.J."/>
            <person name="Villanueva C.J."/>
            <person name="Wroblewski K."/>
            <person name="Tontonoz P."/>
        </authorList>
    </citation>
    <scope>FUNCTION</scope>
</reference>
<reference key="8">
    <citation type="journal article" date="2009" name="Biochem. Biophys. Res. Commun.">
        <title>Serotonin 5-HT2C receptor-independent expression of hypothalamic NOR1, a novel modulator of food intake and energy balance, in mice.</title>
        <authorList>
            <person name="Nonogaki K."/>
            <person name="Kaji T."/>
            <person name="Ohba Y."/>
            <person name="Sumii M."/>
            <person name="Wakameda M."/>
            <person name="Tamari T."/>
        </authorList>
    </citation>
    <scope>FUNCTION</scope>
</reference>
<reference key="9">
    <citation type="journal article" date="2009" name="Circulation">
        <title>Deficiency of the NR4A neuron-derived orphan receptor-1 attenuates neointima formation after vascular injury.</title>
        <authorList>
            <person name="Nomiyama T."/>
            <person name="Zhao Y."/>
            <person name="Gizard F."/>
            <person name="Findeisen H.M."/>
            <person name="Heywood E.B."/>
            <person name="Jones K.L."/>
            <person name="Conneely O.M."/>
            <person name="Bruemmer D."/>
        </authorList>
    </citation>
    <scope>FUNCTION</scope>
</reference>
<reference key="10">
    <citation type="journal article" date="2010" name="Circ. Res.">
        <title>Deficiency of the NR4A orphan nuclear receptor NOR1 decreases monocyte adhesion and atherosclerosis.</title>
        <authorList>
            <person name="Zhao Y."/>
            <person name="Howatt D.A."/>
            <person name="Gizard F."/>
            <person name="Nomiyama T."/>
            <person name="Findeisen H.M."/>
            <person name="Heywood E.B."/>
            <person name="Jones K.L."/>
            <person name="Conneely O.M."/>
            <person name="Daugherty A."/>
            <person name="Bruemmer D."/>
        </authorList>
    </citation>
    <scope>FUNCTION</scope>
    <scope>INDUCTION</scope>
</reference>
<reference key="11">
    <citation type="journal article" date="2010" name="Proc. Natl. Acad. Sci. U.S.A.">
        <title>NR4A orphan nuclear receptors as mediators of CREB-dependent neuroprotection.</title>
        <authorList>
            <person name="Volakakis N."/>
            <person name="Kadkhodaei B."/>
            <person name="Joodmardi E."/>
            <person name="Wallis K."/>
            <person name="Panman L."/>
            <person name="Silvaggi J."/>
            <person name="Spiegelman B.M."/>
            <person name="Perlmann T."/>
        </authorList>
    </citation>
    <scope>FUNCTION</scope>
</reference>
<reference key="12">
    <citation type="journal article" date="2011" name="J. Biol. Chem.">
        <title>Transcriptional regulation of S phase kinase-associated protein 2 by NR4A orphan nuclear receptor NOR1 in vascular smooth muscle cells.</title>
        <authorList>
            <person name="Gizard F."/>
            <person name="Zhao Y."/>
            <person name="Findeisen H.M."/>
            <person name="Qing H."/>
            <person name="Cohn D."/>
            <person name="Heywood E.B."/>
            <person name="Jones K.L."/>
            <person name="Nomiyama T."/>
            <person name="Bruemmer D."/>
        </authorList>
    </citation>
    <scope>FUNCTION</scope>
</reference>
<reference key="13">
    <citation type="journal article" date="2013" name="Mol. Cell. Biol.">
        <title>Control of energy balance by hypothalamic gene circuitry involving two nuclear receptors, neuron-derived orphan receptor 1 and glucocorticoid receptor.</title>
        <authorList>
            <person name="Kim S.G."/>
            <person name="Lee B."/>
            <person name="Kim D.H."/>
            <person name="Kim J."/>
            <person name="Lee S."/>
            <person name="Lee S.K."/>
            <person name="Lee J.W."/>
        </authorList>
    </citation>
    <scope>FUNCTION</scope>
    <scope>INDUCTION</scope>
    <scope>TISSUE SPECIFICITY</scope>
    <scope>DISRUPTION PHENOTYPE</scope>
</reference>
<reference key="14">
    <citation type="journal article" date="2014" name="PLoS ONE">
        <title>Nuclear receptor 4a3 (nr4a3) regulates murine mast cell responses and granule content.</title>
        <authorList>
            <person name="Garcia-Faroldi G."/>
            <person name="Melo F.R."/>
            <person name="Bruemmer D."/>
            <person name="Conneely O.M."/>
            <person name="Pejler G."/>
            <person name="Lundequist A."/>
        </authorList>
    </citation>
    <scope>FUNCTION</scope>
</reference>
<reference key="15">
    <citation type="journal article" date="2014" name="Stem Cells">
        <title>Deficiency of the NR4A orphan nuclear receptor NOR1 in hematopoietic stem cells accelerates atherosclerosis.</title>
        <authorList>
            <person name="Qing H."/>
            <person name="Liu Y."/>
            <person name="Zhao Y."/>
            <person name="Aono J."/>
            <person name="Jones K.L."/>
            <person name="Heywood E.B."/>
            <person name="Howatt D."/>
            <person name="Binkley C.M."/>
            <person name="Daugherty A."/>
            <person name="Liang Y."/>
            <person name="Bruemmer D."/>
        </authorList>
    </citation>
    <scope>FUNCTION</scope>
</reference>
<dbReference type="EMBL" id="AF191211">
    <property type="protein sequence ID" value="AAF05622.1"/>
    <property type="molecule type" value="mRNA"/>
</dbReference>
<dbReference type="EMBL" id="AF191212">
    <property type="protein sequence ID" value="AAF05623.1"/>
    <property type="molecule type" value="mRNA"/>
</dbReference>
<dbReference type="CCDS" id="CCDS18163.1">
    <molecule id="Q9QZB6-1"/>
</dbReference>
<dbReference type="RefSeq" id="NP_001294918.1">
    <molecule id="Q9QZB6-2"/>
    <property type="nucleotide sequence ID" value="NM_001307989.3"/>
</dbReference>
<dbReference type="RefSeq" id="NP_056558.1">
    <molecule id="Q9QZB6-1"/>
    <property type="nucleotide sequence ID" value="NM_015743.4"/>
</dbReference>
<dbReference type="RefSeq" id="XP_006537719.1">
    <molecule id="Q9QZB6-1"/>
    <property type="nucleotide sequence ID" value="XM_006537656.5"/>
</dbReference>
<dbReference type="RefSeq" id="XP_006537720.1">
    <molecule id="Q9QZB6-1"/>
    <property type="nucleotide sequence ID" value="XM_006537657.5"/>
</dbReference>
<dbReference type="RefSeq" id="XP_006537721.1">
    <molecule id="Q9QZB6-1"/>
    <property type="nucleotide sequence ID" value="XM_006537658.2"/>
</dbReference>
<dbReference type="RefSeq" id="XP_030109168.1">
    <molecule id="Q9QZB6-1"/>
    <property type="nucleotide sequence ID" value="XM_030253308.2"/>
</dbReference>
<dbReference type="SMR" id="Q9QZB6"/>
<dbReference type="BioGRID" id="201804">
    <property type="interactions" value="21"/>
</dbReference>
<dbReference type="FunCoup" id="Q9QZB6">
    <property type="interactions" value="591"/>
</dbReference>
<dbReference type="IntAct" id="Q9QZB6">
    <property type="interactions" value="3"/>
</dbReference>
<dbReference type="STRING" id="10090.ENSMUSP00000030025"/>
<dbReference type="iPTMnet" id="Q9QZB6"/>
<dbReference type="PhosphoSitePlus" id="Q9QZB6"/>
<dbReference type="PaxDb" id="10090-ENSMUSP00000030025"/>
<dbReference type="ProteomicsDB" id="293722">
    <molecule id="Q9QZB6-1"/>
</dbReference>
<dbReference type="ProteomicsDB" id="293723">
    <molecule id="Q9QZB6-2"/>
</dbReference>
<dbReference type="Antibodypedia" id="29057">
    <property type="antibodies" value="426 antibodies from 31 providers"/>
</dbReference>
<dbReference type="DNASU" id="18124"/>
<dbReference type="Ensembl" id="ENSMUST00000030025.10">
    <molecule id="Q9QZB6-1"/>
    <property type="protein sequence ID" value="ENSMUSP00000030025.4"/>
    <property type="gene ID" value="ENSMUSG00000028341.10"/>
</dbReference>
<dbReference type="GeneID" id="18124"/>
<dbReference type="KEGG" id="mmu:18124"/>
<dbReference type="UCSC" id="uc008suu.1">
    <molecule id="Q9QZB6-1"/>
    <property type="organism name" value="mouse"/>
</dbReference>
<dbReference type="UCSC" id="uc008suv.1">
    <molecule id="Q9QZB6-2"/>
    <property type="organism name" value="mouse"/>
</dbReference>
<dbReference type="AGR" id="MGI:1352457"/>
<dbReference type="CTD" id="8013"/>
<dbReference type="MGI" id="MGI:1352457">
    <property type="gene designation" value="Nr4a3"/>
</dbReference>
<dbReference type="VEuPathDB" id="HostDB:ENSMUSG00000028341"/>
<dbReference type="eggNOG" id="KOG4217">
    <property type="taxonomic scope" value="Eukaryota"/>
</dbReference>
<dbReference type="GeneTree" id="ENSGT00950000183038"/>
<dbReference type="HOGENOM" id="CLU_007368_14_2_1"/>
<dbReference type="InParanoid" id="Q9QZB6"/>
<dbReference type="PhylomeDB" id="Q9QZB6"/>
<dbReference type="TreeFam" id="TF315430"/>
<dbReference type="Reactome" id="R-MMU-383280">
    <property type="pathway name" value="Nuclear Receptor transcription pathway"/>
</dbReference>
<dbReference type="BioGRID-ORCS" id="18124">
    <property type="hits" value="4 hits in 81 CRISPR screens"/>
</dbReference>
<dbReference type="ChiTaRS" id="Nr4a3">
    <property type="organism name" value="mouse"/>
</dbReference>
<dbReference type="PRO" id="PR:Q9QZB6"/>
<dbReference type="Proteomes" id="UP000000589">
    <property type="component" value="Chromosome 4"/>
</dbReference>
<dbReference type="RNAct" id="Q9QZB6">
    <property type="molecule type" value="protein"/>
</dbReference>
<dbReference type="Bgee" id="ENSMUSG00000028341">
    <property type="expression patterns" value="Expressed in CA1 field of hippocampus and 152 other cell types or tissues"/>
</dbReference>
<dbReference type="ExpressionAtlas" id="Q9QZB6">
    <property type="expression patterns" value="baseline and differential"/>
</dbReference>
<dbReference type="GO" id="GO:0005634">
    <property type="term" value="C:nucleus"/>
    <property type="evidence" value="ECO:0007669"/>
    <property type="project" value="UniProtKB-SubCell"/>
</dbReference>
<dbReference type="GO" id="GO:0005667">
    <property type="term" value="C:transcription regulator complex"/>
    <property type="evidence" value="ECO:0000314"/>
    <property type="project" value="MGI"/>
</dbReference>
<dbReference type="GO" id="GO:0035497">
    <property type="term" value="F:cAMP response element binding"/>
    <property type="evidence" value="ECO:0000314"/>
    <property type="project" value="UniProtKB"/>
</dbReference>
<dbReference type="GO" id="GO:0001216">
    <property type="term" value="F:DNA-binding transcription activator activity"/>
    <property type="evidence" value="ECO:0000314"/>
    <property type="project" value="GO_Central"/>
</dbReference>
<dbReference type="GO" id="GO:0001228">
    <property type="term" value="F:DNA-binding transcription activator activity, RNA polymerase II-specific"/>
    <property type="evidence" value="ECO:0000314"/>
    <property type="project" value="UniProtKB"/>
</dbReference>
<dbReference type="GO" id="GO:0035035">
    <property type="term" value="F:histone acetyltransferase binding"/>
    <property type="evidence" value="ECO:0000353"/>
    <property type="project" value="UniProtKB"/>
</dbReference>
<dbReference type="GO" id="GO:0004879">
    <property type="term" value="F:nuclear receptor activity"/>
    <property type="evidence" value="ECO:0007669"/>
    <property type="project" value="InterPro"/>
</dbReference>
<dbReference type="GO" id="GO:0042803">
    <property type="term" value="F:protein homodimerization activity"/>
    <property type="evidence" value="ECO:0000250"/>
    <property type="project" value="UniProtKB"/>
</dbReference>
<dbReference type="GO" id="GO:0019901">
    <property type="term" value="F:protein kinase binding"/>
    <property type="evidence" value="ECO:0007669"/>
    <property type="project" value="Ensembl"/>
</dbReference>
<dbReference type="GO" id="GO:0000978">
    <property type="term" value="F:RNA polymerase II cis-regulatory region sequence-specific DNA binding"/>
    <property type="evidence" value="ECO:0000314"/>
    <property type="project" value="UniProtKB"/>
</dbReference>
<dbReference type="GO" id="GO:0043565">
    <property type="term" value="F:sequence-specific DNA binding"/>
    <property type="evidence" value="ECO:0000314"/>
    <property type="project" value="MGI"/>
</dbReference>
<dbReference type="GO" id="GO:0001223">
    <property type="term" value="F:transcription coactivator binding"/>
    <property type="evidence" value="ECO:0000353"/>
    <property type="project" value="UniProtKB"/>
</dbReference>
<dbReference type="GO" id="GO:0008270">
    <property type="term" value="F:zinc ion binding"/>
    <property type="evidence" value="ECO:0007669"/>
    <property type="project" value="UniProtKB-KW"/>
</dbReference>
<dbReference type="GO" id="GO:0030534">
    <property type="term" value="P:adult behavior"/>
    <property type="evidence" value="ECO:0000315"/>
    <property type="project" value="MGI"/>
</dbReference>
<dbReference type="GO" id="GO:0007411">
    <property type="term" value="P:axon guidance"/>
    <property type="evidence" value="ECO:0000315"/>
    <property type="project" value="MGI"/>
</dbReference>
<dbReference type="GO" id="GO:0045333">
    <property type="term" value="P:cellular respiration"/>
    <property type="evidence" value="ECO:0000315"/>
    <property type="project" value="UniProtKB"/>
</dbReference>
<dbReference type="GO" id="GO:0071870">
    <property type="term" value="P:cellular response to catecholamine stimulus"/>
    <property type="evidence" value="ECO:0000314"/>
    <property type="project" value="UniProtKB"/>
</dbReference>
<dbReference type="GO" id="GO:0071376">
    <property type="term" value="P:cellular response to corticotropin-releasing hormone stimulus"/>
    <property type="evidence" value="ECO:0000314"/>
    <property type="project" value="UniProtKB"/>
</dbReference>
<dbReference type="GO" id="GO:0044320">
    <property type="term" value="P:cellular response to leptin stimulus"/>
    <property type="evidence" value="ECO:0000314"/>
    <property type="project" value="UniProtKB"/>
</dbReference>
<dbReference type="GO" id="GO:0035726">
    <property type="term" value="P:common myeloid progenitor cell proliferation"/>
    <property type="evidence" value="ECO:0000315"/>
    <property type="project" value="UniProtKB"/>
</dbReference>
<dbReference type="GO" id="GO:0097048">
    <property type="term" value="P:dendritic cell apoptotic process"/>
    <property type="evidence" value="ECO:0000315"/>
    <property type="project" value="MGI"/>
</dbReference>
<dbReference type="GO" id="GO:0097009">
    <property type="term" value="P:energy homeostasis"/>
    <property type="evidence" value="ECO:0000315"/>
    <property type="project" value="UniProtKB"/>
</dbReference>
<dbReference type="GO" id="GO:0045444">
    <property type="term" value="P:fat cell differentiation"/>
    <property type="evidence" value="ECO:0000314"/>
    <property type="project" value="UniProtKB"/>
</dbReference>
<dbReference type="GO" id="GO:0007369">
    <property type="term" value="P:gastrulation"/>
    <property type="evidence" value="ECO:0000315"/>
    <property type="project" value="UniProtKB"/>
</dbReference>
<dbReference type="GO" id="GO:0021766">
    <property type="term" value="P:hippocampus development"/>
    <property type="evidence" value="ECO:0000315"/>
    <property type="project" value="MGI"/>
</dbReference>
<dbReference type="GO" id="GO:0042472">
    <property type="term" value="P:inner ear morphogenesis"/>
    <property type="evidence" value="ECO:0000315"/>
    <property type="project" value="MGI"/>
</dbReference>
<dbReference type="GO" id="GO:0035556">
    <property type="term" value="P:intracellular signal transduction"/>
    <property type="evidence" value="ECO:0000315"/>
    <property type="project" value="UniProtKB"/>
</dbReference>
<dbReference type="GO" id="GO:0043303">
    <property type="term" value="P:mast cell degranulation"/>
    <property type="evidence" value="ECO:0000315"/>
    <property type="project" value="UniProtKB"/>
</dbReference>
<dbReference type="GO" id="GO:0001707">
    <property type="term" value="P:mesoderm formation"/>
    <property type="evidence" value="ECO:0000315"/>
    <property type="project" value="MGI"/>
</dbReference>
<dbReference type="GO" id="GO:0043524">
    <property type="term" value="P:negative regulation of neuron apoptotic process"/>
    <property type="evidence" value="ECO:0000315"/>
    <property type="project" value="MGI"/>
</dbReference>
<dbReference type="GO" id="GO:0034392">
    <property type="term" value="P:negative regulation of smooth muscle cell apoptotic process"/>
    <property type="evidence" value="ECO:0000315"/>
    <property type="project" value="MGI"/>
</dbReference>
<dbReference type="GO" id="GO:0000122">
    <property type="term" value="P:negative regulation of transcription by RNA polymerase II"/>
    <property type="evidence" value="ECO:0000314"/>
    <property type="project" value="UniProtKB"/>
</dbReference>
<dbReference type="GO" id="GO:0050885">
    <property type="term" value="P:neuromuscular process controlling balance"/>
    <property type="evidence" value="ECO:0000315"/>
    <property type="project" value="MGI"/>
</dbReference>
<dbReference type="GO" id="GO:0051402">
    <property type="term" value="P:neuron apoptotic process"/>
    <property type="evidence" value="ECO:0000315"/>
    <property type="project" value="MGI"/>
</dbReference>
<dbReference type="GO" id="GO:0048008">
    <property type="term" value="P:platelet-derived growth factor receptor signaling pathway"/>
    <property type="evidence" value="ECO:0007669"/>
    <property type="project" value="Ensembl"/>
</dbReference>
<dbReference type="GO" id="GO:0010613">
    <property type="term" value="P:positive regulation of cardiac muscle hypertrophy"/>
    <property type="evidence" value="ECO:0000250"/>
    <property type="project" value="UniProtKB"/>
</dbReference>
<dbReference type="GO" id="GO:0045787">
    <property type="term" value="P:positive regulation of cell cycle"/>
    <property type="evidence" value="ECO:0000315"/>
    <property type="project" value="MGI"/>
</dbReference>
<dbReference type="GO" id="GO:0010828">
    <property type="term" value="P:positive regulation of D-glucose transmembrane transport"/>
    <property type="evidence" value="ECO:0000250"/>
    <property type="project" value="UniProtKB"/>
</dbReference>
<dbReference type="GO" id="GO:2000670">
    <property type="term" value="P:positive regulation of dendritic cell apoptotic process"/>
    <property type="evidence" value="ECO:0000315"/>
    <property type="project" value="MGI"/>
</dbReference>
<dbReference type="GO" id="GO:0045893">
    <property type="term" value="P:positive regulation of DNA-templated transcription"/>
    <property type="evidence" value="ECO:0000314"/>
    <property type="project" value="UniProtKB"/>
</dbReference>
<dbReference type="GO" id="GO:0050679">
    <property type="term" value="P:positive regulation of epithelial cell proliferation"/>
    <property type="evidence" value="ECO:0000315"/>
    <property type="project" value="UniProtKB"/>
</dbReference>
<dbReference type="GO" id="GO:2000253">
    <property type="term" value="P:positive regulation of feeding behavior"/>
    <property type="evidence" value="ECO:0000315"/>
    <property type="project" value="UniProtKB"/>
</dbReference>
<dbReference type="GO" id="GO:0038097">
    <property type="term" value="P:positive regulation of mast cell activation by Fc-epsilon receptor signaling pathway"/>
    <property type="evidence" value="ECO:0000315"/>
    <property type="project" value="UniProtKB"/>
</dbReference>
<dbReference type="GO" id="GO:0032765">
    <property type="term" value="P:positive regulation of mast cell cytokine production"/>
    <property type="evidence" value="ECO:0000315"/>
    <property type="project" value="UniProtKB"/>
</dbReference>
<dbReference type="GO" id="GO:1900625">
    <property type="term" value="P:positive regulation of monocyte aggregation"/>
    <property type="evidence" value="ECO:0000315"/>
    <property type="project" value="UniProtKB"/>
</dbReference>
<dbReference type="GO" id="GO:0048661">
    <property type="term" value="P:positive regulation of smooth muscle cell proliferation"/>
    <property type="evidence" value="ECO:0000315"/>
    <property type="project" value="UniProtKB"/>
</dbReference>
<dbReference type="GO" id="GO:0045944">
    <property type="term" value="P:positive regulation of transcription by RNA polymerase II"/>
    <property type="evidence" value="ECO:0000314"/>
    <property type="project" value="UniProtKB"/>
</dbReference>
<dbReference type="GO" id="GO:1904754">
    <property type="term" value="P:positive regulation of vascular associated smooth muscle cell migration"/>
    <property type="evidence" value="ECO:0007669"/>
    <property type="project" value="Ensembl"/>
</dbReference>
<dbReference type="GO" id="GO:1904707">
    <property type="term" value="P:positive regulation of vascular associated smooth muscle cell proliferation"/>
    <property type="evidence" value="ECO:0007669"/>
    <property type="project" value="Ensembl"/>
</dbReference>
<dbReference type="GO" id="GO:0048660">
    <property type="term" value="P:regulation of smooth muscle cell proliferation"/>
    <property type="evidence" value="ECO:0000250"/>
    <property type="project" value="UniProtKB"/>
</dbReference>
<dbReference type="GO" id="GO:0061469">
    <property type="term" value="P:regulation of type B pancreatic cell proliferation"/>
    <property type="evidence" value="ECO:0000250"/>
    <property type="project" value="UniProtKB"/>
</dbReference>
<dbReference type="GO" id="GO:0042542">
    <property type="term" value="P:response to hydrogen peroxide"/>
    <property type="evidence" value="ECO:0000315"/>
    <property type="project" value="MGI"/>
</dbReference>
<dbReference type="GO" id="GO:0048752">
    <property type="term" value="P:semicircular canal morphogenesis"/>
    <property type="evidence" value="ECO:0000315"/>
    <property type="project" value="MGI"/>
</dbReference>
<dbReference type="GO" id="GO:0034390">
    <property type="term" value="P:smooth muscle cell apoptotic process"/>
    <property type="evidence" value="ECO:0000315"/>
    <property type="project" value="MGI"/>
</dbReference>
<dbReference type="GO" id="GO:0060005">
    <property type="term" value="P:vestibular reflex"/>
    <property type="evidence" value="ECO:0000315"/>
    <property type="project" value="MGI"/>
</dbReference>
<dbReference type="CDD" id="cd06969">
    <property type="entry name" value="NR_DBD_NGFI-B"/>
    <property type="match status" value="1"/>
</dbReference>
<dbReference type="FunFam" id="3.30.50.10:FF:000009">
    <property type="entry name" value="nuclear receptor subfamily 4 group A member 2"/>
    <property type="match status" value="1"/>
</dbReference>
<dbReference type="Gene3D" id="3.30.50.10">
    <property type="entry name" value="Erythroid Transcription Factor GATA-1, subunit A"/>
    <property type="match status" value="1"/>
</dbReference>
<dbReference type="Gene3D" id="1.10.565.10">
    <property type="entry name" value="Retinoid X Receptor"/>
    <property type="match status" value="1"/>
</dbReference>
<dbReference type="InterPro" id="IPR035500">
    <property type="entry name" value="NHR-like_dom_sf"/>
</dbReference>
<dbReference type="InterPro" id="IPR003070">
    <property type="entry name" value="NR4A1-3"/>
</dbReference>
<dbReference type="InterPro" id="IPR003072">
    <property type="entry name" value="NR4A3"/>
</dbReference>
<dbReference type="InterPro" id="IPR000536">
    <property type="entry name" value="Nucl_hrmn_rcpt_lig-bd"/>
</dbReference>
<dbReference type="InterPro" id="IPR001723">
    <property type="entry name" value="Nuclear_hrmn_rcpt"/>
</dbReference>
<dbReference type="InterPro" id="IPR001628">
    <property type="entry name" value="Znf_hrmn_rcpt"/>
</dbReference>
<dbReference type="InterPro" id="IPR013088">
    <property type="entry name" value="Znf_NHR/GATA"/>
</dbReference>
<dbReference type="PANTHER" id="PTHR24085">
    <property type="entry name" value="NUCLEAR HORMONE RECEPTOR"/>
    <property type="match status" value="1"/>
</dbReference>
<dbReference type="PANTHER" id="PTHR24085:SF2">
    <property type="entry name" value="NUCLEAR RECEPTOR SUBFAMILY 4 GROUP A MEMBER 3"/>
    <property type="match status" value="1"/>
</dbReference>
<dbReference type="Pfam" id="PF00104">
    <property type="entry name" value="Hormone_recep"/>
    <property type="match status" value="1"/>
</dbReference>
<dbReference type="Pfam" id="PF00105">
    <property type="entry name" value="zf-C4"/>
    <property type="match status" value="1"/>
</dbReference>
<dbReference type="PRINTS" id="PR01286">
    <property type="entry name" value="NORNUCRECPTR"/>
</dbReference>
<dbReference type="PRINTS" id="PR01284">
    <property type="entry name" value="NUCLEARECPTR"/>
</dbReference>
<dbReference type="PRINTS" id="PR00398">
    <property type="entry name" value="STRDHORMONER"/>
</dbReference>
<dbReference type="PRINTS" id="PR00047">
    <property type="entry name" value="STROIDFINGER"/>
</dbReference>
<dbReference type="SMART" id="SM00430">
    <property type="entry name" value="HOLI"/>
    <property type="match status" value="1"/>
</dbReference>
<dbReference type="SMART" id="SM00399">
    <property type="entry name" value="ZnF_C4"/>
    <property type="match status" value="1"/>
</dbReference>
<dbReference type="SUPFAM" id="SSF57716">
    <property type="entry name" value="Glucocorticoid receptor-like (DNA-binding domain)"/>
    <property type="match status" value="1"/>
</dbReference>
<dbReference type="SUPFAM" id="SSF48508">
    <property type="entry name" value="Nuclear receptor ligand-binding domain"/>
    <property type="match status" value="1"/>
</dbReference>
<dbReference type="PROSITE" id="PS51843">
    <property type="entry name" value="NR_LBD"/>
    <property type="match status" value="1"/>
</dbReference>
<dbReference type="PROSITE" id="PS00031">
    <property type="entry name" value="NUCLEAR_REC_DBD_1"/>
    <property type="match status" value="1"/>
</dbReference>
<dbReference type="PROSITE" id="PS51030">
    <property type="entry name" value="NUCLEAR_REC_DBD_2"/>
    <property type="match status" value="1"/>
</dbReference>
<proteinExistence type="evidence at protein level"/>
<evidence type="ECO:0000250" key="1">
    <source>
        <dbReference type="UniProtKB" id="P51179"/>
    </source>
</evidence>
<evidence type="ECO:0000250" key="2">
    <source>
        <dbReference type="UniProtKB" id="Q92570"/>
    </source>
</evidence>
<evidence type="ECO:0000255" key="3">
    <source>
        <dbReference type="PROSITE-ProRule" id="PRU00407"/>
    </source>
</evidence>
<evidence type="ECO:0000255" key="4">
    <source>
        <dbReference type="PROSITE-ProRule" id="PRU01189"/>
    </source>
</evidence>
<evidence type="ECO:0000256" key="5">
    <source>
        <dbReference type="SAM" id="MobiDB-lite"/>
    </source>
</evidence>
<evidence type="ECO:0000269" key="6">
    <source>
    </source>
</evidence>
<evidence type="ECO:0000269" key="7">
    <source>
    </source>
</evidence>
<evidence type="ECO:0000269" key="8">
    <source>
    </source>
</evidence>
<evidence type="ECO:0000269" key="9">
    <source>
    </source>
</evidence>
<evidence type="ECO:0000269" key="10">
    <source>
    </source>
</evidence>
<evidence type="ECO:0000269" key="11">
    <source>
    </source>
</evidence>
<evidence type="ECO:0000269" key="12">
    <source>
    </source>
</evidence>
<evidence type="ECO:0000269" key="13">
    <source>
    </source>
</evidence>
<evidence type="ECO:0000269" key="14">
    <source>
    </source>
</evidence>
<evidence type="ECO:0000269" key="15">
    <source>
    </source>
</evidence>
<evidence type="ECO:0000269" key="16">
    <source>
    </source>
</evidence>
<evidence type="ECO:0000269" key="17">
    <source>
    </source>
</evidence>
<evidence type="ECO:0000269" key="18">
    <source>
    </source>
</evidence>
<evidence type="ECO:0000269" key="19">
    <source>
    </source>
</evidence>
<evidence type="ECO:0000303" key="20">
    <source>
    </source>
</evidence>
<evidence type="ECO:0000305" key="21"/>
<keyword id="KW-0025">Alternative splicing</keyword>
<keyword id="KW-0238">DNA-binding</keyword>
<keyword id="KW-0479">Metal-binding</keyword>
<keyword id="KW-0539">Nucleus</keyword>
<keyword id="KW-0675">Receptor</keyword>
<keyword id="KW-1185">Reference proteome</keyword>
<keyword id="KW-0804">Transcription</keyword>
<keyword id="KW-0805">Transcription regulation</keyword>
<keyword id="KW-0862">Zinc</keyword>
<keyword id="KW-0863">Zinc-finger</keyword>
<organism>
    <name type="scientific">Mus musculus</name>
    <name type="common">Mouse</name>
    <dbReference type="NCBI Taxonomy" id="10090"/>
    <lineage>
        <taxon>Eukaryota</taxon>
        <taxon>Metazoa</taxon>
        <taxon>Chordata</taxon>
        <taxon>Craniata</taxon>
        <taxon>Vertebrata</taxon>
        <taxon>Euteleostomi</taxon>
        <taxon>Mammalia</taxon>
        <taxon>Eutheria</taxon>
        <taxon>Euarchontoglires</taxon>
        <taxon>Glires</taxon>
        <taxon>Rodentia</taxon>
        <taxon>Myomorpha</taxon>
        <taxon>Muroidea</taxon>
        <taxon>Muridae</taxon>
        <taxon>Murinae</taxon>
        <taxon>Mus</taxon>
        <taxon>Mus</taxon>
    </lineage>
</organism>
<protein>
    <recommendedName>
        <fullName>Nuclear receptor subfamily 4 group A member 3</fullName>
    </recommendedName>
    <alternativeName>
        <fullName>Orphan nuclear receptor TEC</fullName>
    </alternativeName>
    <alternativeName>
        <fullName>Translocated in extraskeletal chondrosarcoma</fullName>
    </alternativeName>
</protein>
<accession>Q9QZB6</accession>
<accession>Q9QZB5</accession>
<name>NR4A3_MOUSE</name>
<sequence>MPCVQAQYSPSPPGSTYATQTYGSEYTTEIMNPDYTKLTMDLGSTGIMATATTSLPSFSTFMEGYPSSCELKPSCLYQMPPSGPRPLIKMEEGREHGYHHHHHHHHHHHHHQQQQPSIPPPSGPEDEVLPSTSMYFKQSPPSTPTTPGFPPQAGALWDDELPSAPGCIAPGPLLDPQMKAVPPMAAAARFPIFFKPSPPHPPAPSPAGGHHLGYDPTAAAALSLPLGAAAAAGSQAAALEGHPYGLPLAKRTATLTFPPLGLTASPTASSLLGESPSLPSPPNRSSSSGEGTCAVCGDNAACQHYGVRTCEGCKGFFKRTVQKNAKYVCLANKNCPVDKRRRNRCQYCRFQKCLSVGMVKEVVRTDSLKGRRGRLPSKPKSPLQQEPSQPSPPSPPICMMNALVRALTDATPRDLDYSRYCPTDQATAGTDAEHVQQFYNLLTASIDVSRSWAEKIPGFTDLPKEDQTLLIESAFLELFVLRLSIRSNTAEDKFVFCNGLVLHRLQCLRGFGEWLDSIKDFSLNLQSLNLDIQALACLSALSMITERHGLKEPKRVEELCTKITSSLKDHQRKGQALEPSEPKVLRALVELRKICTQGLQRIFYLKLEDLVPPPSVIDKLFLDTLPF</sequence>